<proteinExistence type="inferred from homology"/>
<evidence type="ECO:0000255" key="1">
    <source>
        <dbReference type="HAMAP-Rule" id="MF_00205"/>
    </source>
</evidence>
<comment type="function">
    <text evidence="1">The UvrABC repair system catalyzes the recognition and processing of DNA lesions. UvrA is an ATPase and a DNA-binding protein. A damage recognition complex composed of 2 UvrA and 2 UvrB subunits scans DNA for abnormalities. When the presence of a lesion has been verified by UvrB, the UvrA molecules dissociate.</text>
</comment>
<comment type="subunit">
    <text evidence="1">Forms a heterotetramer with UvrB during the search for lesions.</text>
</comment>
<comment type="subcellular location">
    <subcellularLocation>
        <location evidence="1">Cytoplasm</location>
    </subcellularLocation>
</comment>
<comment type="similarity">
    <text evidence="1">Belongs to the ABC transporter superfamily. UvrA family.</text>
</comment>
<feature type="chain" id="PRO_0000093093" description="UvrABC system protein A">
    <location>
        <begin position="1"/>
        <end position="948"/>
    </location>
</feature>
<feature type="domain" description="ABC transporter 1" evidence="1">
    <location>
        <begin position="309"/>
        <end position="587"/>
    </location>
</feature>
<feature type="domain" description="ABC transporter 2" evidence="1">
    <location>
        <begin position="607"/>
        <end position="935"/>
    </location>
</feature>
<feature type="zinc finger region" description="C4-type" evidence="1">
    <location>
        <begin position="252"/>
        <end position="279"/>
    </location>
</feature>
<feature type="zinc finger region" description="C4-type" evidence="1">
    <location>
        <begin position="738"/>
        <end position="764"/>
    </location>
</feature>
<feature type="binding site" evidence="1">
    <location>
        <begin position="33"/>
        <end position="40"/>
    </location>
    <ligand>
        <name>ATP</name>
        <dbReference type="ChEBI" id="CHEBI:30616"/>
    </ligand>
</feature>
<feature type="binding site" evidence="1">
    <location>
        <begin position="639"/>
        <end position="646"/>
    </location>
    <ligand>
        <name>ATP</name>
        <dbReference type="ChEBI" id="CHEBI:30616"/>
    </ligand>
</feature>
<reference key="1">
    <citation type="journal article" date="2004" name="Proc. Natl. Acad. Sci. U.S.A.">
        <title>Complete genomes of two clinical Staphylococcus aureus strains: evidence for the rapid evolution of virulence and drug resistance.</title>
        <authorList>
            <person name="Holden M.T.G."/>
            <person name="Feil E.J."/>
            <person name="Lindsay J.A."/>
            <person name="Peacock S.J."/>
            <person name="Day N.P.J."/>
            <person name="Enright M.C."/>
            <person name="Foster T.J."/>
            <person name="Moore C.E."/>
            <person name="Hurst L."/>
            <person name="Atkin R."/>
            <person name="Barron A."/>
            <person name="Bason N."/>
            <person name="Bentley S.D."/>
            <person name="Chillingworth C."/>
            <person name="Chillingworth T."/>
            <person name="Churcher C."/>
            <person name="Clark L."/>
            <person name="Corton C."/>
            <person name="Cronin A."/>
            <person name="Doggett J."/>
            <person name="Dowd L."/>
            <person name="Feltwell T."/>
            <person name="Hance Z."/>
            <person name="Harris B."/>
            <person name="Hauser H."/>
            <person name="Holroyd S."/>
            <person name="Jagels K."/>
            <person name="James K.D."/>
            <person name="Lennard N."/>
            <person name="Line A."/>
            <person name="Mayes R."/>
            <person name="Moule S."/>
            <person name="Mungall K."/>
            <person name="Ormond D."/>
            <person name="Quail M.A."/>
            <person name="Rabbinowitsch E."/>
            <person name="Rutherford K.M."/>
            <person name="Sanders M."/>
            <person name="Sharp S."/>
            <person name="Simmonds M."/>
            <person name="Stevens K."/>
            <person name="Whitehead S."/>
            <person name="Barrell B.G."/>
            <person name="Spratt B.G."/>
            <person name="Parkhill J."/>
        </authorList>
    </citation>
    <scope>NUCLEOTIDE SEQUENCE [LARGE SCALE GENOMIC DNA]</scope>
    <source>
        <strain>MSSA476</strain>
    </source>
</reference>
<organism>
    <name type="scientific">Staphylococcus aureus (strain MSSA476)</name>
    <dbReference type="NCBI Taxonomy" id="282459"/>
    <lineage>
        <taxon>Bacteria</taxon>
        <taxon>Bacillati</taxon>
        <taxon>Bacillota</taxon>
        <taxon>Bacilli</taxon>
        <taxon>Bacillales</taxon>
        <taxon>Staphylococcaceae</taxon>
        <taxon>Staphylococcus</taxon>
    </lineage>
</organism>
<gene>
    <name evidence="1" type="primary">uvrA</name>
    <name type="ordered locus">SAS0724</name>
</gene>
<accession>Q6GB71</accession>
<protein>
    <recommendedName>
        <fullName evidence="1">UvrABC system protein A</fullName>
        <shortName evidence="1">UvrA protein</shortName>
    </recommendedName>
    <alternativeName>
        <fullName evidence="1">Excinuclease ABC subunit A</fullName>
    </alternativeName>
</protein>
<keyword id="KW-0067">ATP-binding</keyword>
<keyword id="KW-0963">Cytoplasm</keyword>
<keyword id="KW-0227">DNA damage</keyword>
<keyword id="KW-0228">DNA excision</keyword>
<keyword id="KW-0234">DNA repair</keyword>
<keyword id="KW-0238">DNA-binding</keyword>
<keyword id="KW-0267">Excision nuclease</keyword>
<keyword id="KW-0479">Metal-binding</keyword>
<keyword id="KW-0547">Nucleotide-binding</keyword>
<keyword id="KW-0677">Repeat</keyword>
<keyword id="KW-0742">SOS response</keyword>
<keyword id="KW-0862">Zinc</keyword>
<keyword id="KW-0863">Zinc-finger</keyword>
<name>UVRA_STAAS</name>
<dbReference type="EMBL" id="BX571857">
    <property type="protein sequence ID" value="CAG42500.1"/>
    <property type="molecule type" value="Genomic_DNA"/>
</dbReference>
<dbReference type="RefSeq" id="WP_000662681.1">
    <property type="nucleotide sequence ID" value="NC_002953.3"/>
</dbReference>
<dbReference type="SMR" id="Q6GB71"/>
<dbReference type="KEGG" id="sas:SAS0724"/>
<dbReference type="HOGENOM" id="CLU_001370_0_2_9"/>
<dbReference type="GO" id="GO:0005737">
    <property type="term" value="C:cytoplasm"/>
    <property type="evidence" value="ECO:0007669"/>
    <property type="project" value="UniProtKB-SubCell"/>
</dbReference>
<dbReference type="GO" id="GO:0009380">
    <property type="term" value="C:excinuclease repair complex"/>
    <property type="evidence" value="ECO:0007669"/>
    <property type="project" value="InterPro"/>
</dbReference>
<dbReference type="GO" id="GO:0005524">
    <property type="term" value="F:ATP binding"/>
    <property type="evidence" value="ECO:0007669"/>
    <property type="project" value="UniProtKB-UniRule"/>
</dbReference>
<dbReference type="GO" id="GO:0016887">
    <property type="term" value="F:ATP hydrolysis activity"/>
    <property type="evidence" value="ECO:0007669"/>
    <property type="project" value="InterPro"/>
</dbReference>
<dbReference type="GO" id="GO:0003677">
    <property type="term" value="F:DNA binding"/>
    <property type="evidence" value="ECO:0007669"/>
    <property type="project" value="UniProtKB-UniRule"/>
</dbReference>
<dbReference type="GO" id="GO:0009381">
    <property type="term" value="F:excinuclease ABC activity"/>
    <property type="evidence" value="ECO:0007669"/>
    <property type="project" value="UniProtKB-UniRule"/>
</dbReference>
<dbReference type="GO" id="GO:0008270">
    <property type="term" value="F:zinc ion binding"/>
    <property type="evidence" value="ECO:0007669"/>
    <property type="project" value="UniProtKB-UniRule"/>
</dbReference>
<dbReference type="GO" id="GO:0006289">
    <property type="term" value="P:nucleotide-excision repair"/>
    <property type="evidence" value="ECO:0007669"/>
    <property type="project" value="UniProtKB-UniRule"/>
</dbReference>
<dbReference type="GO" id="GO:0009432">
    <property type="term" value="P:SOS response"/>
    <property type="evidence" value="ECO:0007669"/>
    <property type="project" value="UniProtKB-UniRule"/>
</dbReference>
<dbReference type="CDD" id="cd03270">
    <property type="entry name" value="ABC_UvrA_I"/>
    <property type="match status" value="1"/>
</dbReference>
<dbReference type="CDD" id="cd03271">
    <property type="entry name" value="ABC_UvrA_II"/>
    <property type="match status" value="1"/>
</dbReference>
<dbReference type="FunFam" id="1.20.1580.10:FF:000002">
    <property type="entry name" value="UvrABC system protein A"/>
    <property type="match status" value="1"/>
</dbReference>
<dbReference type="FunFam" id="3.40.50.300:FF:000028">
    <property type="entry name" value="UvrABC system protein A"/>
    <property type="match status" value="1"/>
</dbReference>
<dbReference type="Gene3D" id="1.10.8.280">
    <property type="entry name" value="ABC transporter ATPase domain-like"/>
    <property type="match status" value="1"/>
</dbReference>
<dbReference type="Gene3D" id="1.20.1580.10">
    <property type="entry name" value="ABC transporter ATPase like domain"/>
    <property type="match status" value="2"/>
</dbReference>
<dbReference type="Gene3D" id="3.30.1490.20">
    <property type="entry name" value="ATP-grasp fold, A domain"/>
    <property type="match status" value="1"/>
</dbReference>
<dbReference type="Gene3D" id="3.40.50.300">
    <property type="entry name" value="P-loop containing nucleotide triphosphate hydrolases"/>
    <property type="match status" value="2"/>
</dbReference>
<dbReference type="HAMAP" id="MF_00205">
    <property type="entry name" value="UvrA"/>
    <property type="match status" value="1"/>
</dbReference>
<dbReference type="InterPro" id="IPR003439">
    <property type="entry name" value="ABC_transporter-like_ATP-bd"/>
</dbReference>
<dbReference type="InterPro" id="IPR017871">
    <property type="entry name" value="ABC_transporter-like_CS"/>
</dbReference>
<dbReference type="InterPro" id="IPR013815">
    <property type="entry name" value="ATP_grasp_subdomain_1"/>
</dbReference>
<dbReference type="InterPro" id="IPR027417">
    <property type="entry name" value="P-loop_NTPase"/>
</dbReference>
<dbReference type="InterPro" id="IPR004602">
    <property type="entry name" value="UvrA"/>
</dbReference>
<dbReference type="InterPro" id="IPR041552">
    <property type="entry name" value="UvrA_DNA-bd"/>
</dbReference>
<dbReference type="InterPro" id="IPR041102">
    <property type="entry name" value="UvrA_inter"/>
</dbReference>
<dbReference type="NCBIfam" id="NF001503">
    <property type="entry name" value="PRK00349.1"/>
    <property type="match status" value="1"/>
</dbReference>
<dbReference type="NCBIfam" id="TIGR00630">
    <property type="entry name" value="uvra"/>
    <property type="match status" value="1"/>
</dbReference>
<dbReference type="PANTHER" id="PTHR43152">
    <property type="entry name" value="UVRABC SYSTEM PROTEIN A"/>
    <property type="match status" value="1"/>
</dbReference>
<dbReference type="PANTHER" id="PTHR43152:SF3">
    <property type="entry name" value="UVRABC SYSTEM PROTEIN A"/>
    <property type="match status" value="1"/>
</dbReference>
<dbReference type="Pfam" id="PF17755">
    <property type="entry name" value="UvrA_DNA-bind"/>
    <property type="match status" value="1"/>
</dbReference>
<dbReference type="Pfam" id="PF17760">
    <property type="entry name" value="UvrA_inter"/>
    <property type="match status" value="1"/>
</dbReference>
<dbReference type="SUPFAM" id="SSF52540">
    <property type="entry name" value="P-loop containing nucleoside triphosphate hydrolases"/>
    <property type="match status" value="2"/>
</dbReference>
<dbReference type="PROSITE" id="PS00211">
    <property type="entry name" value="ABC_TRANSPORTER_1"/>
    <property type="match status" value="2"/>
</dbReference>
<dbReference type="PROSITE" id="PS50893">
    <property type="entry name" value="ABC_TRANSPORTER_2"/>
    <property type="match status" value="1"/>
</dbReference>
<sequence length="948" mass="105368">MKEPSIVVKGARAHNLKDIDIELPKNKLIVMTGLSGSGKSSLAFDTIYAEGQRRYVESLSAYARQFLGQMDKPDVDTIEGLSPAISIDQKTTSKNPRSTVATVTEIYDYIRLLYARVGKPYCPNHNIEIESQTVQQMVDRIMELEARTKIQLLAPVIAHRKGSHEKLIEDIGKKGYVRLRIDGEIVDVNDVPTLDKNKNHTIEVVVDRLVVKDGIETRLADSIETALELSEGQLTVDVIDGEDLKFSESHACPICGFSIGELEPRMFSFNSPFGACPTCDGLGQKLTVDVDLVVPDKDKTLNEGAIEPWIPTSSDFYPTLLKRVCEVYKINMDKPFKKLTERQRDILLYGSGDKEIEFTFTQRQGGTRKRTMVFEGVVPNISRRFHESPSEYTREMMSKYMTELPCETCHGKRLSREALSVYVGGLNIGEVVEYSISQALNYYKNIDLSEQDQAIANQILKEIISRLTFLNNVGLEYLTLNRASGTLSGGEAQRIRLATQIGSRLTGVLYVLDEPSIGLHQRDNDRLINTLKEMRDLGNTLIVVEHDDDTMRAADYLVDIGPGAGEHGGQIVSSGTPQKVMKDKKSLTGQYLSGKKRIEVPEYRRPASDRKISIRGARSNNLKGVDVDIPLSIMTVVTGVSGSGKSSLVNEVLYKSLAQKINKSKVKPGLYDKIEGIDQLDKIIDIDQSPIGRTPRSNPATYTGVFDDIRDVFAQTNEAKIRGYQKGRFSFNVKGGRCEACKGDGIIKIEMHFLPDVYVPCEVCDGKRYNRETLEVTYKGKNIADILEMTVEEATQFFENIPKIKRKLQTLVDVGLGYVTLGQQATTLSGGEAQRVKLASELHKRSTGKSIYILDEPTTGLHVDDISRLLKVLNRLVENGDTVVIIEHNLDVIKTADYIIDLGPEGGSGGGTIVATGTPEDIAQTKSSYTGKYLKEVLERDKQNTEDK</sequence>